<evidence type="ECO:0000255" key="1">
    <source>
        <dbReference type="HAMAP-Rule" id="MF_00203"/>
    </source>
</evidence>
<evidence type="ECO:0000256" key="2">
    <source>
        <dbReference type="SAM" id="MobiDB-lite"/>
    </source>
</evidence>
<protein>
    <recommendedName>
        <fullName evidence="1">UvrABC system protein C</fullName>
        <shortName evidence="1">Protein UvrC</shortName>
    </recommendedName>
    <alternativeName>
        <fullName evidence="1">Excinuclease ABC subunit C</fullName>
    </alternativeName>
</protein>
<gene>
    <name evidence="1" type="primary">uvrC</name>
    <name type="ordered locus">SSA_1297</name>
</gene>
<feature type="chain" id="PRO_1000077853" description="UvrABC system protein C">
    <location>
        <begin position="1"/>
        <end position="611"/>
    </location>
</feature>
<feature type="domain" description="GIY-YIG" evidence="1">
    <location>
        <begin position="14"/>
        <end position="91"/>
    </location>
</feature>
<feature type="domain" description="UVR" evidence="1">
    <location>
        <begin position="196"/>
        <end position="231"/>
    </location>
</feature>
<feature type="region of interest" description="Disordered" evidence="2">
    <location>
        <begin position="587"/>
        <end position="611"/>
    </location>
</feature>
<proteinExistence type="inferred from homology"/>
<organism>
    <name type="scientific">Streptococcus sanguinis (strain SK36)</name>
    <dbReference type="NCBI Taxonomy" id="388919"/>
    <lineage>
        <taxon>Bacteria</taxon>
        <taxon>Bacillati</taxon>
        <taxon>Bacillota</taxon>
        <taxon>Bacilli</taxon>
        <taxon>Lactobacillales</taxon>
        <taxon>Streptococcaceae</taxon>
        <taxon>Streptococcus</taxon>
    </lineage>
</organism>
<dbReference type="EMBL" id="CP000387">
    <property type="protein sequence ID" value="ABN44696.1"/>
    <property type="molecule type" value="Genomic_DNA"/>
</dbReference>
<dbReference type="RefSeq" id="WP_011837033.1">
    <property type="nucleotide sequence ID" value="NC_009009.1"/>
</dbReference>
<dbReference type="RefSeq" id="YP_001035246.1">
    <property type="nucleotide sequence ID" value="NC_009009.1"/>
</dbReference>
<dbReference type="SMR" id="A3CNE1"/>
<dbReference type="STRING" id="388919.SSA_1297"/>
<dbReference type="KEGG" id="ssa:SSA_1297"/>
<dbReference type="PATRIC" id="fig|388919.9.peg.1234"/>
<dbReference type="eggNOG" id="COG0322">
    <property type="taxonomic scope" value="Bacteria"/>
</dbReference>
<dbReference type="HOGENOM" id="CLU_014841_3_2_9"/>
<dbReference type="OrthoDB" id="9804933at2"/>
<dbReference type="Proteomes" id="UP000002148">
    <property type="component" value="Chromosome"/>
</dbReference>
<dbReference type="GO" id="GO:0005737">
    <property type="term" value="C:cytoplasm"/>
    <property type="evidence" value="ECO:0007669"/>
    <property type="project" value="UniProtKB-SubCell"/>
</dbReference>
<dbReference type="GO" id="GO:0009380">
    <property type="term" value="C:excinuclease repair complex"/>
    <property type="evidence" value="ECO:0007669"/>
    <property type="project" value="InterPro"/>
</dbReference>
<dbReference type="GO" id="GO:0003677">
    <property type="term" value="F:DNA binding"/>
    <property type="evidence" value="ECO:0007669"/>
    <property type="project" value="UniProtKB-UniRule"/>
</dbReference>
<dbReference type="GO" id="GO:0009381">
    <property type="term" value="F:excinuclease ABC activity"/>
    <property type="evidence" value="ECO:0007669"/>
    <property type="project" value="UniProtKB-UniRule"/>
</dbReference>
<dbReference type="GO" id="GO:0006289">
    <property type="term" value="P:nucleotide-excision repair"/>
    <property type="evidence" value="ECO:0007669"/>
    <property type="project" value="UniProtKB-UniRule"/>
</dbReference>
<dbReference type="GO" id="GO:0009432">
    <property type="term" value="P:SOS response"/>
    <property type="evidence" value="ECO:0007669"/>
    <property type="project" value="UniProtKB-UniRule"/>
</dbReference>
<dbReference type="CDD" id="cd10434">
    <property type="entry name" value="GIY-YIG_UvrC_Cho"/>
    <property type="match status" value="1"/>
</dbReference>
<dbReference type="FunFam" id="1.10.150.20:FF:000005">
    <property type="entry name" value="UvrABC system protein C"/>
    <property type="match status" value="1"/>
</dbReference>
<dbReference type="FunFam" id="3.30.420.340:FF:000002">
    <property type="entry name" value="UvrABC system protein C"/>
    <property type="match status" value="1"/>
</dbReference>
<dbReference type="FunFam" id="3.40.1440.10:FF:000001">
    <property type="entry name" value="UvrABC system protein C"/>
    <property type="match status" value="1"/>
</dbReference>
<dbReference type="FunFam" id="4.10.860.10:FF:000007">
    <property type="entry name" value="UvrABC system protein C"/>
    <property type="match status" value="1"/>
</dbReference>
<dbReference type="Gene3D" id="1.10.150.20">
    <property type="entry name" value="5' to 3' exonuclease, C-terminal subdomain"/>
    <property type="match status" value="1"/>
</dbReference>
<dbReference type="Gene3D" id="3.40.1440.10">
    <property type="entry name" value="GIY-YIG endonuclease"/>
    <property type="match status" value="1"/>
</dbReference>
<dbReference type="Gene3D" id="4.10.860.10">
    <property type="entry name" value="UVR domain"/>
    <property type="match status" value="1"/>
</dbReference>
<dbReference type="Gene3D" id="3.30.420.340">
    <property type="entry name" value="UvrC, RNAse H endonuclease domain"/>
    <property type="match status" value="1"/>
</dbReference>
<dbReference type="HAMAP" id="MF_00203">
    <property type="entry name" value="UvrC"/>
    <property type="match status" value="1"/>
</dbReference>
<dbReference type="InterPro" id="IPR000305">
    <property type="entry name" value="GIY-YIG_endonuc"/>
</dbReference>
<dbReference type="InterPro" id="IPR035901">
    <property type="entry name" value="GIY-YIG_endonuc_sf"/>
</dbReference>
<dbReference type="InterPro" id="IPR047296">
    <property type="entry name" value="GIY-YIG_UvrC_Cho"/>
</dbReference>
<dbReference type="InterPro" id="IPR010994">
    <property type="entry name" value="RuvA_2-like"/>
</dbReference>
<dbReference type="InterPro" id="IPR001943">
    <property type="entry name" value="UVR_dom"/>
</dbReference>
<dbReference type="InterPro" id="IPR036876">
    <property type="entry name" value="UVR_dom_sf"/>
</dbReference>
<dbReference type="InterPro" id="IPR050066">
    <property type="entry name" value="UvrABC_protein_C"/>
</dbReference>
<dbReference type="InterPro" id="IPR004791">
    <property type="entry name" value="UvrC"/>
</dbReference>
<dbReference type="InterPro" id="IPR001162">
    <property type="entry name" value="UvrC_RNase_H_dom"/>
</dbReference>
<dbReference type="InterPro" id="IPR038476">
    <property type="entry name" value="UvrC_RNase_H_dom_sf"/>
</dbReference>
<dbReference type="NCBIfam" id="TIGR00194">
    <property type="entry name" value="uvrC"/>
    <property type="match status" value="1"/>
</dbReference>
<dbReference type="PANTHER" id="PTHR30562:SF1">
    <property type="entry name" value="UVRABC SYSTEM PROTEIN C"/>
    <property type="match status" value="1"/>
</dbReference>
<dbReference type="PANTHER" id="PTHR30562">
    <property type="entry name" value="UVRC/OXIDOREDUCTASE"/>
    <property type="match status" value="1"/>
</dbReference>
<dbReference type="Pfam" id="PF01541">
    <property type="entry name" value="GIY-YIG"/>
    <property type="match status" value="1"/>
</dbReference>
<dbReference type="Pfam" id="PF14520">
    <property type="entry name" value="HHH_5"/>
    <property type="match status" value="1"/>
</dbReference>
<dbReference type="Pfam" id="PF02151">
    <property type="entry name" value="UVR"/>
    <property type="match status" value="1"/>
</dbReference>
<dbReference type="Pfam" id="PF22920">
    <property type="entry name" value="UvrC_RNaseH"/>
    <property type="match status" value="1"/>
</dbReference>
<dbReference type="Pfam" id="PF08459">
    <property type="entry name" value="UvrC_RNaseH_dom"/>
    <property type="match status" value="1"/>
</dbReference>
<dbReference type="SMART" id="SM00465">
    <property type="entry name" value="GIYc"/>
    <property type="match status" value="1"/>
</dbReference>
<dbReference type="SUPFAM" id="SSF46600">
    <property type="entry name" value="C-terminal UvrC-binding domain of UvrB"/>
    <property type="match status" value="1"/>
</dbReference>
<dbReference type="SUPFAM" id="SSF82771">
    <property type="entry name" value="GIY-YIG endonuclease"/>
    <property type="match status" value="1"/>
</dbReference>
<dbReference type="SUPFAM" id="SSF47781">
    <property type="entry name" value="RuvA domain 2-like"/>
    <property type="match status" value="1"/>
</dbReference>
<dbReference type="PROSITE" id="PS50164">
    <property type="entry name" value="GIY_YIG"/>
    <property type="match status" value="1"/>
</dbReference>
<dbReference type="PROSITE" id="PS50151">
    <property type="entry name" value="UVR"/>
    <property type="match status" value="1"/>
</dbReference>
<dbReference type="PROSITE" id="PS50165">
    <property type="entry name" value="UVRC"/>
    <property type="match status" value="1"/>
</dbReference>
<keyword id="KW-0963">Cytoplasm</keyword>
<keyword id="KW-0227">DNA damage</keyword>
<keyword id="KW-0228">DNA excision</keyword>
<keyword id="KW-0234">DNA repair</keyword>
<keyword id="KW-0267">Excision nuclease</keyword>
<keyword id="KW-1185">Reference proteome</keyword>
<keyword id="KW-0742">SOS response</keyword>
<accession>A3CNE1</accession>
<sequence length="611" mass="70135">MNKLIQSKLELLPTSPGCYIHKDKNDTIIYVGKAKNLRNRVRSYFRGSHDTKTEALVSEIEDFEFIVTESNIEALLLEINLIKENQPKYNIMLKDDKSYPFIKITNETYPRLIITRQVKKDVGLYFGPYPDVGAANEIKRLLDRLFPFRKCTNPPEKVCFYYHLGQCKAHTICKVDSQYFKELAQEVAAFLKGQDDQIIEDLRGKMAGAAQAMEFEKAAEYRDLIQSIGTLRTKQRVMAKDLQNRDVFGYYVDKGWMCVQVFFVRQGKLIERDVNLFPYYNDPDEDFLTYIGQFYQEKSHLKPNEILIPADIDEEAVRAMVDTKVLKPQRGEKKQLVNLAIKNARVSLQQKFDLLEKSIEKTQGAIENLGQLLNIPTPVRIESFDNSNIMGTSPVSAMVVFVNGKPSKKDYRKYKIKTVVGPDDYASMREVIKRRYSRVIRDGLTPPDLIVIDGGQGQVNIAKEVIQEQLGLDIPIAGLQKNDKHQTHELLFGDPLQVVELSRNSQEFFLLQRIQDEVHRFAITFHRQLRSKNSFSSQLDGIEGLGPKRKQNLMKHFKSLTKIKEASVDQIVEVGVPRAVAEAVREKLNPKTQEQEQAQLREVAEPQIGLE</sequence>
<reference key="1">
    <citation type="journal article" date="2007" name="J. Bacteriol.">
        <title>Genome of the opportunistic pathogen Streptococcus sanguinis.</title>
        <authorList>
            <person name="Xu P."/>
            <person name="Alves J.M."/>
            <person name="Kitten T."/>
            <person name="Brown A."/>
            <person name="Chen Z."/>
            <person name="Ozaki L.S."/>
            <person name="Manque P."/>
            <person name="Ge X."/>
            <person name="Serrano M.G."/>
            <person name="Puiu D."/>
            <person name="Hendricks S."/>
            <person name="Wang Y."/>
            <person name="Chaplin M.D."/>
            <person name="Akan D."/>
            <person name="Paik S."/>
            <person name="Peterson D.L."/>
            <person name="Macrina F.L."/>
            <person name="Buck G.A."/>
        </authorList>
    </citation>
    <scope>NUCLEOTIDE SEQUENCE [LARGE SCALE GENOMIC DNA]</scope>
    <source>
        <strain>SK36</strain>
    </source>
</reference>
<name>UVRC_STRSV</name>
<comment type="function">
    <text evidence="1">The UvrABC repair system catalyzes the recognition and processing of DNA lesions. UvrC both incises the 5' and 3' sides of the lesion. The N-terminal half is responsible for the 3' incision and the C-terminal half is responsible for the 5' incision.</text>
</comment>
<comment type="subunit">
    <text evidence="1">Interacts with UvrB in an incision complex.</text>
</comment>
<comment type="subcellular location">
    <subcellularLocation>
        <location evidence="1">Cytoplasm</location>
    </subcellularLocation>
</comment>
<comment type="similarity">
    <text evidence="1">Belongs to the UvrC family.</text>
</comment>